<reference key="1">
    <citation type="journal article" date="2010" name="PLoS Genet.">
        <title>Genome sequence of the plant growth promoting endophytic bacterium Enterobacter sp. 638.</title>
        <authorList>
            <person name="Taghavi S."/>
            <person name="van der Lelie D."/>
            <person name="Hoffman A."/>
            <person name="Zhang Y.B."/>
            <person name="Walla M.D."/>
            <person name="Vangronsveld J."/>
            <person name="Newman L."/>
            <person name="Monchy S."/>
        </authorList>
    </citation>
    <scope>NUCLEOTIDE SEQUENCE [LARGE SCALE GENOMIC DNA]</scope>
    <source>
        <strain>638</strain>
    </source>
</reference>
<feature type="chain" id="PRO_0000362675" description="NADH-quinone oxidoreductase subunit A">
    <location>
        <begin position="1"/>
        <end position="146"/>
    </location>
</feature>
<feature type="transmembrane region" description="Helical" evidence="1">
    <location>
        <begin position="16"/>
        <end position="36"/>
    </location>
</feature>
<feature type="transmembrane region" description="Helical" evidence="1">
    <location>
        <begin position="68"/>
        <end position="88"/>
    </location>
</feature>
<feature type="transmembrane region" description="Helical" evidence="1">
    <location>
        <begin position="98"/>
        <end position="118"/>
    </location>
</feature>
<accession>A4WCR7</accession>
<protein>
    <recommendedName>
        <fullName evidence="1">NADH-quinone oxidoreductase subunit A</fullName>
        <ecNumber evidence="1">7.1.1.-</ecNumber>
    </recommendedName>
    <alternativeName>
        <fullName evidence="1">NADH dehydrogenase I subunit A</fullName>
    </alternativeName>
    <alternativeName>
        <fullName evidence="1">NDH-1 subunit A</fullName>
    </alternativeName>
    <alternativeName>
        <fullName evidence="1">NUO1</fullName>
    </alternativeName>
</protein>
<dbReference type="EC" id="7.1.1.-" evidence="1"/>
<dbReference type="EMBL" id="CP000653">
    <property type="protein sequence ID" value="ABP61497.1"/>
    <property type="molecule type" value="Genomic_DNA"/>
</dbReference>
<dbReference type="RefSeq" id="WP_015959830.1">
    <property type="nucleotide sequence ID" value="NC_009436.1"/>
</dbReference>
<dbReference type="SMR" id="A4WCR7"/>
<dbReference type="STRING" id="399742.Ent638_2832"/>
<dbReference type="GeneID" id="93305799"/>
<dbReference type="KEGG" id="ent:Ent638_2832"/>
<dbReference type="eggNOG" id="COG0838">
    <property type="taxonomic scope" value="Bacteria"/>
</dbReference>
<dbReference type="HOGENOM" id="CLU_119549_2_1_6"/>
<dbReference type="OrthoDB" id="9791970at2"/>
<dbReference type="Proteomes" id="UP000000230">
    <property type="component" value="Chromosome"/>
</dbReference>
<dbReference type="GO" id="GO:0030964">
    <property type="term" value="C:NADH dehydrogenase complex"/>
    <property type="evidence" value="ECO:0007669"/>
    <property type="project" value="TreeGrafter"/>
</dbReference>
<dbReference type="GO" id="GO:0005886">
    <property type="term" value="C:plasma membrane"/>
    <property type="evidence" value="ECO:0007669"/>
    <property type="project" value="UniProtKB-SubCell"/>
</dbReference>
<dbReference type="GO" id="GO:0008137">
    <property type="term" value="F:NADH dehydrogenase (ubiquinone) activity"/>
    <property type="evidence" value="ECO:0007669"/>
    <property type="project" value="InterPro"/>
</dbReference>
<dbReference type="GO" id="GO:0050136">
    <property type="term" value="F:NADH:ubiquinone reductase (non-electrogenic) activity"/>
    <property type="evidence" value="ECO:0007669"/>
    <property type="project" value="UniProtKB-UniRule"/>
</dbReference>
<dbReference type="GO" id="GO:0048038">
    <property type="term" value="F:quinone binding"/>
    <property type="evidence" value="ECO:0007669"/>
    <property type="project" value="UniProtKB-KW"/>
</dbReference>
<dbReference type="FunFam" id="1.20.58.1610:FF:000003">
    <property type="entry name" value="NADH-quinone oxidoreductase subunit A"/>
    <property type="match status" value="1"/>
</dbReference>
<dbReference type="Gene3D" id="1.20.58.1610">
    <property type="entry name" value="NADH:ubiquinone/plastoquinone oxidoreductase, chain 3"/>
    <property type="match status" value="1"/>
</dbReference>
<dbReference type="HAMAP" id="MF_01394">
    <property type="entry name" value="NDH1_NuoA"/>
    <property type="match status" value="1"/>
</dbReference>
<dbReference type="InterPro" id="IPR023043">
    <property type="entry name" value="NAD(P)H_OxRDtase_bac/plastid"/>
</dbReference>
<dbReference type="InterPro" id="IPR000440">
    <property type="entry name" value="NADH_UbQ/plastoQ_OxRdtase_su3"/>
</dbReference>
<dbReference type="InterPro" id="IPR038430">
    <property type="entry name" value="NDAH_ubi_oxred_su3_sf"/>
</dbReference>
<dbReference type="PANTHER" id="PTHR11058:SF21">
    <property type="entry name" value="NADH-QUINONE OXIDOREDUCTASE SUBUNIT A"/>
    <property type="match status" value="1"/>
</dbReference>
<dbReference type="PANTHER" id="PTHR11058">
    <property type="entry name" value="NADH-UBIQUINONE OXIDOREDUCTASE CHAIN 3"/>
    <property type="match status" value="1"/>
</dbReference>
<dbReference type="Pfam" id="PF00507">
    <property type="entry name" value="Oxidored_q4"/>
    <property type="match status" value="1"/>
</dbReference>
<keyword id="KW-0997">Cell inner membrane</keyword>
<keyword id="KW-1003">Cell membrane</keyword>
<keyword id="KW-0472">Membrane</keyword>
<keyword id="KW-0520">NAD</keyword>
<keyword id="KW-0874">Quinone</keyword>
<keyword id="KW-1278">Translocase</keyword>
<keyword id="KW-0812">Transmembrane</keyword>
<keyword id="KW-1133">Transmembrane helix</keyword>
<keyword id="KW-0813">Transport</keyword>
<keyword id="KW-0830">Ubiquinone</keyword>
<sequence length="146" mass="16332">MSMSTSTEVVAHHWAFAIFLIVAIGLCCLMLIGGWFLGGRARARHKNTPFESGIDSVGTARLRLSAKFYLVAMFFVIFDVEALYLFAWSTSIRESGWVGFVEAAIFILVLLAGLVYLVRIGALDWTPTRSRRELVNPENSNSNRQQ</sequence>
<evidence type="ECO:0000255" key="1">
    <source>
        <dbReference type="HAMAP-Rule" id="MF_01394"/>
    </source>
</evidence>
<gene>
    <name evidence="1" type="primary">nuoA</name>
    <name type="ordered locus">Ent638_2832</name>
</gene>
<comment type="function">
    <text evidence="1">NDH-1 shuttles electrons from NADH, via FMN and iron-sulfur (Fe-S) centers, to quinones in the respiratory chain. The immediate electron acceptor for the enzyme in this species is believed to be ubiquinone. Couples the redox reaction to proton translocation (for every two electrons transferred, four hydrogen ions are translocated across the cytoplasmic membrane), and thus conserves the redox energy in a proton gradient.</text>
</comment>
<comment type="catalytic activity">
    <reaction evidence="1">
        <text>a quinone + NADH + 5 H(+)(in) = a quinol + NAD(+) + 4 H(+)(out)</text>
        <dbReference type="Rhea" id="RHEA:57888"/>
        <dbReference type="ChEBI" id="CHEBI:15378"/>
        <dbReference type="ChEBI" id="CHEBI:24646"/>
        <dbReference type="ChEBI" id="CHEBI:57540"/>
        <dbReference type="ChEBI" id="CHEBI:57945"/>
        <dbReference type="ChEBI" id="CHEBI:132124"/>
    </reaction>
</comment>
<comment type="subunit">
    <text evidence="1">NDH-1 is composed of 13 different subunits. Subunits NuoA, H, J, K, L, M, N constitute the membrane sector of the complex.</text>
</comment>
<comment type="subcellular location">
    <subcellularLocation>
        <location evidence="1">Cell inner membrane</location>
        <topology evidence="1">Multi-pass membrane protein</topology>
    </subcellularLocation>
</comment>
<comment type="similarity">
    <text evidence="1">Belongs to the complex I subunit 3 family.</text>
</comment>
<name>NUOA_ENT38</name>
<proteinExistence type="inferred from homology"/>
<organism>
    <name type="scientific">Enterobacter sp. (strain 638)</name>
    <dbReference type="NCBI Taxonomy" id="399742"/>
    <lineage>
        <taxon>Bacteria</taxon>
        <taxon>Pseudomonadati</taxon>
        <taxon>Pseudomonadota</taxon>
        <taxon>Gammaproteobacteria</taxon>
        <taxon>Enterobacterales</taxon>
        <taxon>Enterobacteriaceae</taxon>
        <taxon>Enterobacter</taxon>
    </lineage>
</organism>